<keyword id="KW-0007">Acetylation</keyword>
<keyword id="KW-0067">ATP-binding</keyword>
<keyword id="KW-0418">Kinase</keyword>
<keyword id="KW-0547">Nucleotide-binding</keyword>
<keyword id="KW-0597">Phosphoprotein</keyword>
<keyword id="KW-1185">Reference proteome</keyword>
<keyword id="KW-0723">Serine/threonine-protein kinase</keyword>
<keyword id="KW-0808">Transferase</keyword>
<keyword id="KW-0829">Tyrosine-protein kinase</keyword>
<accession>Q4R945</accession>
<sequence length="856" mass="96783">MESEDLSGRELTIDSIMNKVRDIKNKFKNEDLTDELSLNKISADTTDNSGTVNQIMMMANSPEDWLSLLLKLEKNSVPLSDALLNKLIGRYSQAIEALPPDKYGQNESFARIQVRFAELKAIQEPDDARDYFQMARANCKKFAFVHISFAQFELSQGNVKKSKQLLQEAVERGAVPLEMLEIALRNLNLQKKQLLSEEEKKTLSASMVLTAQESFSSSLGHLQNRNNSCDSRGQTTKARFLYGENMPPQDAEIGYRNSLKQTNKTKQSCPFGRVPVNLLNSPDCDVKTDDSVVPCFIKRQTSRSECRDLVVAGSKPSGNDSCELRNLKSVQNINCKEPLVSDEKSSELIITDSVTLKNKTESSLRAKLEETKEYQEPEVPESNQKQWQSKRKSACINENPVASSNQWQIPELARKVNIEKHTTFEQPVFSVSKQSPPMSASKWFDPKSICKTPSSNTLDDYMSCFRTPVVKNDFPPACQLSTPYGQPACFQQQQQQIPATPLQNLQVLASSSANECISVKGRIYSILKQIGSGGSSKVFQVLNEKKQIYAIKFVNLEEADNQTLDSYRNEIAYLNKLQQHSDKIIRLYDYEITDQYIYMVMECGNIDLNSWLKKKKSIDPWERKSYWKNMLEAVHTIHQHGIVHSDLKPANFLIVDGMLKLIDFGIANQMQPDTTSIVKDSQVGTVNYMPPEAIKDMSSSRENGKSKSKISPKSDVWSLGCILYYMTYGKTPFQHIINQISKLHAIIDPNHEIEFPDIPEKDLQDVLKCCLKRDPKQRISIPELLAHPYVQIQTHPGNQMAKGTTEEMKYVLGQLVGLNSPNSILKAAKTLYEHYSGGESHNSSSSKTFGKKREKK</sequence>
<comment type="function">
    <text evidence="2">Involved in mitotic spindle assembly checkpoint signaling, a process that delays anaphase until chromosomes are bioriented on the spindle, and in the repair of incorrect mitotic kinetochore-spindle microtubule attachments. Phosphorylates MAD1L1 to promote the mitotic spindle assembly checkpoint. Phosphorylates CDCA8/Borealin leading to enhanced AURKB activity at the kinetochore. Phosphorylates SKA3 at 'Ser-34' leading to dissociation of the SKA complex from microtubules and destabilization of microtubule-kinetochore attachments. Phosphorylates KNL1, KNTC1 and autophosphorylates. Phosphorylates MCRS1 which enhances recruitment of KIF2A to the minus end of spindle microtubules and promotes chromosome alignment.</text>
</comment>
<comment type="catalytic activity">
    <reaction evidence="2">
        <text>L-seryl-[protein] + ATP = O-phospho-L-seryl-[protein] + ADP + H(+)</text>
        <dbReference type="Rhea" id="RHEA:17989"/>
        <dbReference type="Rhea" id="RHEA-COMP:9863"/>
        <dbReference type="Rhea" id="RHEA-COMP:11604"/>
        <dbReference type="ChEBI" id="CHEBI:15378"/>
        <dbReference type="ChEBI" id="CHEBI:29999"/>
        <dbReference type="ChEBI" id="CHEBI:30616"/>
        <dbReference type="ChEBI" id="CHEBI:83421"/>
        <dbReference type="ChEBI" id="CHEBI:456216"/>
        <dbReference type="EC" id="2.7.12.1"/>
    </reaction>
</comment>
<comment type="catalytic activity">
    <reaction evidence="2">
        <text>L-threonyl-[protein] + ATP = O-phospho-L-threonyl-[protein] + ADP + H(+)</text>
        <dbReference type="Rhea" id="RHEA:46608"/>
        <dbReference type="Rhea" id="RHEA-COMP:11060"/>
        <dbReference type="Rhea" id="RHEA-COMP:11605"/>
        <dbReference type="ChEBI" id="CHEBI:15378"/>
        <dbReference type="ChEBI" id="CHEBI:30013"/>
        <dbReference type="ChEBI" id="CHEBI:30616"/>
        <dbReference type="ChEBI" id="CHEBI:61977"/>
        <dbReference type="ChEBI" id="CHEBI:456216"/>
        <dbReference type="EC" id="2.7.12.1"/>
    </reaction>
</comment>
<comment type="catalytic activity">
    <reaction evidence="2">
        <text>L-tyrosyl-[protein] + ATP = O-phospho-L-tyrosyl-[protein] + ADP + H(+)</text>
        <dbReference type="Rhea" id="RHEA:10596"/>
        <dbReference type="Rhea" id="RHEA-COMP:10136"/>
        <dbReference type="Rhea" id="RHEA-COMP:20101"/>
        <dbReference type="ChEBI" id="CHEBI:15378"/>
        <dbReference type="ChEBI" id="CHEBI:30616"/>
        <dbReference type="ChEBI" id="CHEBI:46858"/>
        <dbReference type="ChEBI" id="CHEBI:61978"/>
        <dbReference type="ChEBI" id="CHEBI:456216"/>
        <dbReference type="EC" id="2.7.12.1"/>
    </reaction>
</comment>
<comment type="activity regulation">
    <text evidence="1">Inhibited by the ATP-competitive kinase inhibitor, SP600125.</text>
</comment>
<comment type="subunit">
    <text evidence="2">Interacts with TPR; the interactions occurs in a microtubule-independent manner (By similarity). Interacts with MAD1L1 and MAD2L1 (By similarity).</text>
</comment>
<comment type="similarity">
    <text evidence="3">Belongs to the protein kinase superfamily. Ser/Thr protein kinase family.</text>
</comment>
<protein>
    <recommendedName>
        <fullName>Dual specificity protein kinase TTK</fullName>
        <ecNumber evidence="2">2.7.12.1</ecNumber>
    </recommendedName>
</protein>
<proteinExistence type="evidence at transcript level"/>
<gene>
    <name type="primary">TTK</name>
    <name type="ORF">QtsA-10742</name>
</gene>
<organism>
    <name type="scientific">Macaca fascicularis</name>
    <name type="common">Crab-eating macaque</name>
    <name type="synonym">Cynomolgus monkey</name>
    <dbReference type="NCBI Taxonomy" id="9541"/>
    <lineage>
        <taxon>Eukaryota</taxon>
        <taxon>Metazoa</taxon>
        <taxon>Chordata</taxon>
        <taxon>Craniata</taxon>
        <taxon>Vertebrata</taxon>
        <taxon>Euteleostomi</taxon>
        <taxon>Mammalia</taxon>
        <taxon>Eutheria</taxon>
        <taxon>Euarchontoglires</taxon>
        <taxon>Primates</taxon>
        <taxon>Haplorrhini</taxon>
        <taxon>Catarrhini</taxon>
        <taxon>Cercopithecidae</taxon>
        <taxon>Cercopithecinae</taxon>
        <taxon>Macaca</taxon>
    </lineage>
</organism>
<feature type="chain" id="PRO_0000311351" description="Dual specificity protein kinase TTK">
    <location>
        <begin position="1"/>
        <end position="856"/>
    </location>
</feature>
<feature type="domain" description="Protein kinase" evidence="3">
    <location>
        <begin position="524"/>
        <end position="790"/>
    </location>
</feature>
<feature type="region of interest" description="Disordered" evidence="5">
    <location>
        <begin position="369"/>
        <end position="392"/>
    </location>
</feature>
<feature type="region of interest" description="Disordered" evidence="5">
    <location>
        <begin position="835"/>
        <end position="856"/>
    </location>
</feature>
<feature type="compositionally biased region" description="Low complexity" evidence="5">
    <location>
        <begin position="835"/>
        <end position="846"/>
    </location>
</feature>
<feature type="active site" description="Proton acceptor" evidence="3 4">
    <location>
        <position position="646"/>
    </location>
</feature>
<feature type="binding site" evidence="3">
    <location>
        <begin position="530"/>
        <end position="538"/>
    </location>
    <ligand>
        <name>ATP</name>
        <dbReference type="ChEBI" id="CHEBI:30616"/>
    </ligand>
</feature>
<feature type="binding site" evidence="3">
    <location>
        <position position="552"/>
    </location>
    <ligand>
        <name>ATP</name>
        <dbReference type="ChEBI" id="CHEBI:30616"/>
    </ligand>
</feature>
<feature type="modified residue" description="N-acetylmethionine" evidence="2">
    <location>
        <position position="1"/>
    </location>
</feature>
<feature type="modified residue" description="Phosphoserine" evidence="2">
    <location>
        <position position="7"/>
    </location>
</feature>
<feature type="modified residue" description="Phosphothreonine" evidence="2">
    <location>
        <position position="33"/>
    </location>
</feature>
<feature type="modified residue" description="Phosphoserine" evidence="2">
    <location>
        <position position="37"/>
    </location>
</feature>
<feature type="modified residue" description="Phosphoserine" evidence="2">
    <location>
        <position position="80"/>
    </location>
</feature>
<feature type="modified residue" description="Phosphoserine" evidence="2">
    <location>
        <position position="281"/>
    </location>
</feature>
<feature type="modified residue" description="Phosphoserine" evidence="2">
    <location>
        <position position="317"/>
    </location>
</feature>
<feature type="modified residue" description="Phosphoserine" evidence="2">
    <location>
        <position position="321"/>
    </location>
</feature>
<feature type="modified residue" description="Phosphothreonine" evidence="2">
    <location>
        <position position="360"/>
    </location>
</feature>
<feature type="modified residue" description="Phosphoserine" evidence="2">
    <location>
        <position position="363"/>
    </location>
</feature>
<feature type="modified residue" description="Phosphoserine" evidence="2">
    <location>
        <position position="393"/>
    </location>
</feature>
<feature type="modified residue" description="Phosphoserine" evidence="2">
    <location>
        <position position="435"/>
    </location>
</feature>
<feature type="modified residue" description="Phosphoserine" evidence="2">
    <location>
        <position position="454"/>
    </location>
</feature>
<feature type="modified residue" description="Phosphoserine" evidence="2">
    <location>
        <position position="820"/>
    </location>
</feature>
<reference key="1">
    <citation type="submission" date="2005-06" db="EMBL/GenBank/DDBJ databases">
        <title>DNA sequences of macaque genes expressed in brain or testis and its evolutionary implications.</title>
        <authorList>
            <consortium name="International consortium for macaque cDNA sequencing and analysis"/>
        </authorList>
    </citation>
    <scope>NUCLEOTIDE SEQUENCE [LARGE SCALE MRNA]</scope>
    <source>
        <tissue>Testis</tissue>
    </source>
</reference>
<name>TTK_MACFA</name>
<evidence type="ECO:0000250" key="1"/>
<evidence type="ECO:0000250" key="2">
    <source>
        <dbReference type="UniProtKB" id="P33981"/>
    </source>
</evidence>
<evidence type="ECO:0000255" key="3">
    <source>
        <dbReference type="PROSITE-ProRule" id="PRU00159"/>
    </source>
</evidence>
<evidence type="ECO:0000255" key="4">
    <source>
        <dbReference type="PROSITE-ProRule" id="PRU10027"/>
    </source>
</evidence>
<evidence type="ECO:0000256" key="5">
    <source>
        <dbReference type="SAM" id="MobiDB-lite"/>
    </source>
</evidence>
<dbReference type="EC" id="2.7.12.1" evidence="2"/>
<dbReference type="EMBL" id="AB168252">
    <property type="protein sequence ID" value="BAE00376.1"/>
    <property type="molecule type" value="mRNA"/>
</dbReference>
<dbReference type="SMR" id="Q4R945"/>
<dbReference type="STRING" id="9541.ENSMFAP00000019792"/>
<dbReference type="eggNOG" id="KOG0596">
    <property type="taxonomic scope" value="Eukaryota"/>
</dbReference>
<dbReference type="Proteomes" id="UP000233100">
    <property type="component" value="Unplaced"/>
</dbReference>
<dbReference type="GO" id="GO:0000776">
    <property type="term" value="C:kinetochore"/>
    <property type="evidence" value="ECO:0007669"/>
    <property type="project" value="TreeGrafter"/>
</dbReference>
<dbReference type="GO" id="GO:0005634">
    <property type="term" value="C:nucleus"/>
    <property type="evidence" value="ECO:0007669"/>
    <property type="project" value="TreeGrafter"/>
</dbReference>
<dbReference type="GO" id="GO:0005524">
    <property type="term" value="F:ATP binding"/>
    <property type="evidence" value="ECO:0007669"/>
    <property type="project" value="UniProtKB-KW"/>
</dbReference>
<dbReference type="GO" id="GO:0106310">
    <property type="term" value="F:protein serine kinase activity"/>
    <property type="evidence" value="ECO:0007669"/>
    <property type="project" value="RHEA"/>
</dbReference>
<dbReference type="GO" id="GO:0004674">
    <property type="term" value="F:protein serine/threonine kinase activity"/>
    <property type="evidence" value="ECO:0007669"/>
    <property type="project" value="UniProtKB-KW"/>
</dbReference>
<dbReference type="GO" id="GO:0004712">
    <property type="term" value="F:protein serine/threonine/tyrosine kinase activity"/>
    <property type="evidence" value="ECO:0007669"/>
    <property type="project" value="UniProtKB-EC"/>
</dbReference>
<dbReference type="GO" id="GO:0004713">
    <property type="term" value="F:protein tyrosine kinase activity"/>
    <property type="evidence" value="ECO:0007669"/>
    <property type="project" value="UniProtKB-KW"/>
</dbReference>
<dbReference type="GO" id="GO:0033316">
    <property type="term" value="P:meiotic spindle assembly checkpoint signaling"/>
    <property type="evidence" value="ECO:0007669"/>
    <property type="project" value="TreeGrafter"/>
</dbReference>
<dbReference type="GO" id="GO:0007094">
    <property type="term" value="P:mitotic spindle assembly checkpoint signaling"/>
    <property type="evidence" value="ECO:0007669"/>
    <property type="project" value="TreeGrafter"/>
</dbReference>
<dbReference type="GO" id="GO:0098813">
    <property type="term" value="P:nuclear chromosome segregation"/>
    <property type="evidence" value="ECO:0007669"/>
    <property type="project" value="UniProtKB-ARBA"/>
</dbReference>
<dbReference type="GO" id="GO:0034501">
    <property type="term" value="P:protein localization to kinetochore"/>
    <property type="evidence" value="ECO:0007669"/>
    <property type="project" value="TreeGrafter"/>
</dbReference>
<dbReference type="CDD" id="cd14131">
    <property type="entry name" value="PKc_Mps1"/>
    <property type="match status" value="1"/>
</dbReference>
<dbReference type="FunFam" id="1.10.510.10:FF:000308">
    <property type="entry name" value="Dual specificity protein kinase TTK"/>
    <property type="match status" value="1"/>
</dbReference>
<dbReference type="FunFam" id="1.25.40.10:FF:000101">
    <property type="entry name" value="Dual specificity protein kinase TTK"/>
    <property type="match status" value="1"/>
</dbReference>
<dbReference type="FunFam" id="3.30.200.20:FF:000131">
    <property type="entry name" value="Dual specificity protein kinase TTK"/>
    <property type="match status" value="1"/>
</dbReference>
<dbReference type="Gene3D" id="3.30.200.20">
    <property type="entry name" value="Phosphorylase Kinase, domain 1"/>
    <property type="match status" value="1"/>
</dbReference>
<dbReference type="Gene3D" id="1.25.40.10">
    <property type="entry name" value="Tetratricopeptide repeat domain"/>
    <property type="match status" value="1"/>
</dbReference>
<dbReference type="Gene3D" id="1.10.510.10">
    <property type="entry name" value="Transferase(Phosphotransferase) domain 1"/>
    <property type="match status" value="1"/>
</dbReference>
<dbReference type="InterPro" id="IPR011009">
    <property type="entry name" value="Kinase-like_dom_sf"/>
</dbReference>
<dbReference type="InterPro" id="IPR027084">
    <property type="entry name" value="Mps1_cat"/>
</dbReference>
<dbReference type="InterPro" id="IPR000719">
    <property type="entry name" value="Prot_kinase_dom"/>
</dbReference>
<dbReference type="InterPro" id="IPR017441">
    <property type="entry name" value="Protein_kinase_ATP_BS"/>
</dbReference>
<dbReference type="InterPro" id="IPR008271">
    <property type="entry name" value="Ser/Thr_kinase_AS"/>
</dbReference>
<dbReference type="InterPro" id="IPR011990">
    <property type="entry name" value="TPR-like_helical_dom_sf"/>
</dbReference>
<dbReference type="PANTHER" id="PTHR22974:SF21">
    <property type="entry name" value="DUAL SPECIFICITY PROTEIN KINASE TTK"/>
    <property type="match status" value="1"/>
</dbReference>
<dbReference type="PANTHER" id="PTHR22974">
    <property type="entry name" value="MIXED LINEAGE PROTEIN KINASE"/>
    <property type="match status" value="1"/>
</dbReference>
<dbReference type="Pfam" id="PF00069">
    <property type="entry name" value="Pkinase"/>
    <property type="match status" value="1"/>
</dbReference>
<dbReference type="SMART" id="SM00220">
    <property type="entry name" value="S_TKc"/>
    <property type="match status" value="1"/>
</dbReference>
<dbReference type="SUPFAM" id="SSF56112">
    <property type="entry name" value="Protein kinase-like (PK-like)"/>
    <property type="match status" value="1"/>
</dbReference>
<dbReference type="SUPFAM" id="SSF48452">
    <property type="entry name" value="TPR-like"/>
    <property type="match status" value="1"/>
</dbReference>
<dbReference type="PROSITE" id="PS00107">
    <property type="entry name" value="PROTEIN_KINASE_ATP"/>
    <property type="match status" value="1"/>
</dbReference>
<dbReference type="PROSITE" id="PS50011">
    <property type="entry name" value="PROTEIN_KINASE_DOM"/>
    <property type="match status" value="1"/>
</dbReference>
<dbReference type="PROSITE" id="PS00108">
    <property type="entry name" value="PROTEIN_KINASE_ST"/>
    <property type="match status" value="1"/>
</dbReference>